<name>GLNE_SALEP</name>
<dbReference type="EC" id="2.7.7.89" evidence="1"/>
<dbReference type="EC" id="2.7.7.42" evidence="1"/>
<dbReference type="EMBL" id="AM933172">
    <property type="protein sequence ID" value="CAR34619.1"/>
    <property type="molecule type" value="Genomic_DNA"/>
</dbReference>
<dbReference type="RefSeq" id="WP_000188292.1">
    <property type="nucleotide sequence ID" value="NC_011294.1"/>
</dbReference>
<dbReference type="SMR" id="B5QZ37"/>
<dbReference type="KEGG" id="set:SEN3043"/>
<dbReference type="HOGENOM" id="CLU_006233_0_1_6"/>
<dbReference type="Proteomes" id="UP000000613">
    <property type="component" value="Chromosome"/>
</dbReference>
<dbReference type="GO" id="GO:0005829">
    <property type="term" value="C:cytosol"/>
    <property type="evidence" value="ECO:0007669"/>
    <property type="project" value="TreeGrafter"/>
</dbReference>
<dbReference type="GO" id="GO:0008882">
    <property type="term" value="F:[glutamate-ammonia-ligase] adenylyltransferase activity"/>
    <property type="evidence" value="ECO:0007669"/>
    <property type="project" value="UniProtKB-UniRule"/>
</dbReference>
<dbReference type="GO" id="GO:0047388">
    <property type="term" value="F:[glutamine synthetase]-adenylyl-L-tyrosine phosphorylase activity"/>
    <property type="evidence" value="ECO:0007669"/>
    <property type="project" value="UniProtKB-EC"/>
</dbReference>
<dbReference type="GO" id="GO:0005524">
    <property type="term" value="F:ATP binding"/>
    <property type="evidence" value="ECO:0007669"/>
    <property type="project" value="UniProtKB-UniRule"/>
</dbReference>
<dbReference type="GO" id="GO:0000287">
    <property type="term" value="F:magnesium ion binding"/>
    <property type="evidence" value="ECO:0007669"/>
    <property type="project" value="UniProtKB-UniRule"/>
</dbReference>
<dbReference type="GO" id="GO:0000820">
    <property type="term" value="P:regulation of glutamine family amino acid metabolic process"/>
    <property type="evidence" value="ECO:0007669"/>
    <property type="project" value="UniProtKB-UniRule"/>
</dbReference>
<dbReference type="CDD" id="cd05401">
    <property type="entry name" value="NT_GlnE_GlnD_like"/>
    <property type="match status" value="2"/>
</dbReference>
<dbReference type="FunFam" id="1.10.4050.10:FF:000001">
    <property type="entry name" value="Bifunctional glutamine synthetase adenylyltransferase/adenylyl-removing enzyme"/>
    <property type="match status" value="1"/>
</dbReference>
<dbReference type="FunFam" id="1.20.120.1510:FF:000001">
    <property type="entry name" value="Bifunctional glutamine synthetase adenylyltransferase/adenylyl-removing enzyme"/>
    <property type="match status" value="1"/>
</dbReference>
<dbReference type="FunFam" id="1.20.120.330:FF:000005">
    <property type="entry name" value="Bifunctional glutamine synthetase adenylyltransferase/adenylyl-removing enzyme"/>
    <property type="match status" value="1"/>
</dbReference>
<dbReference type="FunFam" id="1.20.120.330:FF:000008">
    <property type="entry name" value="Bifunctional glutamine synthetase adenylyltransferase/adenylyl-removing enzyme"/>
    <property type="match status" value="1"/>
</dbReference>
<dbReference type="FunFam" id="3.30.460.10:FF:000009">
    <property type="entry name" value="Bifunctional glutamine synthetase adenylyltransferase/adenylyl-removing enzyme"/>
    <property type="match status" value="1"/>
</dbReference>
<dbReference type="FunFam" id="3.30.460.10:FF:000014">
    <property type="entry name" value="Bifunctional glutamine synthetase adenylyltransferase/adenylyl-removing enzyme"/>
    <property type="match status" value="1"/>
</dbReference>
<dbReference type="Gene3D" id="1.20.120.1510">
    <property type="match status" value="1"/>
</dbReference>
<dbReference type="Gene3D" id="3.30.460.10">
    <property type="entry name" value="Beta Polymerase, domain 2"/>
    <property type="match status" value="2"/>
</dbReference>
<dbReference type="Gene3D" id="1.10.4050.10">
    <property type="entry name" value="Glutamine synthase adenylyltransferase GlnE"/>
    <property type="match status" value="1"/>
</dbReference>
<dbReference type="Gene3D" id="1.20.120.330">
    <property type="entry name" value="Nucleotidyltransferases domain 2"/>
    <property type="match status" value="2"/>
</dbReference>
<dbReference type="HAMAP" id="MF_00802">
    <property type="entry name" value="GlnE"/>
    <property type="match status" value="1"/>
</dbReference>
<dbReference type="InterPro" id="IPR023057">
    <property type="entry name" value="GlnE"/>
</dbReference>
<dbReference type="InterPro" id="IPR005190">
    <property type="entry name" value="GlnE_rpt_dom"/>
</dbReference>
<dbReference type="InterPro" id="IPR043519">
    <property type="entry name" value="NT_sf"/>
</dbReference>
<dbReference type="InterPro" id="IPR013546">
    <property type="entry name" value="PII_UdlTrfase/GS_AdlTrfase"/>
</dbReference>
<dbReference type="NCBIfam" id="NF008292">
    <property type="entry name" value="PRK11072.1"/>
    <property type="match status" value="1"/>
</dbReference>
<dbReference type="PANTHER" id="PTHR30621:SF0">
    <property type="entry name" value="BIFUNCTIONAL GLUTAMINE SYNTHETASE ADENYLYLTRANSFERASE_ADENYLYL-REMOVING ENZYME"/>
    <property type="match status" value="1"/>
</dbReference>
<dbReference type="PANTHER" id="PTHR30621">
    <property type="entry name" value="GLUTAMINE SYNTHETASE ADENYLYLTRANSFERASE"/>
    <property type="match status" value="1"/>
</dbReference>
<dbReference type="Pfam" id="PF08335">
    <property type="entry name" value="GlnD_UR_UTase"/>
    <property type="match status" value="2"/>
</dbReference>
<dbReference type="Pfam" id="PF03710">
    <property type="entry name" value="GlnE"/>
    <property type="match status" value="2"/>
</dbReference>
<dbReference type="SUPFAM" id="SSF81301">
    <property type="entry name" value="Nucleotidyltransferase"/>
    <property type="match status" value="2"/>
</dbReference>
<dbReference type="SUPFAM" id="SSF81593">
    <property type="entry name" value="Nucleotidyltransferase substrate binding subunit/domain"/>
    <property type="match status" value="2"/>
</dbReference>
<evidence type="ECO:0000255" key="1">
    <source>
        <dbReference type="HAMAP-Rule" id="MF_00802"/>
    </source>
</evidence>
<sequence length="947" mass="108067">MTPLSSPLSQYWQTIVERLPEGFTETSLSVQAKSVLTFSDFALDSVIAHPEWLAELESASPQADEWRHYAGWLQEALAGVCDDASLMRELRFFRRRIMVRIAWAQTLSLVDDETILQQLSHLAETLIVGARDWLYAACCREWGTPCNPQGVPQPLLILGMGKLGGGELNFSSDIDLIFAWPEHGETRGGRRELDNAQFFTRLGQRLIKALDQPTMDGFVYRVDMRLRPFGDSGPLVLSFAALEDYYQEQGRDWERYAMVKARLMGDNDDAWSRELRAMLRPFVFRRYIDFSVIQSLRNMKGMIAREVRRRGLKDNIKLGAGGIREIEFIVQVFQLIRGGREPSLQSRSLLPTLDAIAALHLLPENDVAQLRVAYLFLRRLENLLQSINDEQTQTLPADDLNRARLAWGMKAENWPQLVGELTDHMANVRRVFNELIGDDEADTPQEEERSEPWREVWQDALQEDDSTPVLAHLADEDRRQVLTLIADFRKELDKRPIGPRGRQVLDQLMPHLLADVCSREDAAVTLSRITPLLAGIVTRTTYLELLSEFPGALKHLIMLCAASPMIASQLARYPLLLDELLDPGTLYQPTATDAYRDELRQYLLRVPEEDEEQQLEALRQFKQAQLLRIAAADIAGTLPVMKVSDHLTWLAEAMIDAVVQQAWTQMVARYGQPAHLDERQGRGFAVVGYGKLGGWELGYSSDLDLIFLHDCPMDVMTNGEREIDGRQFYLRLAQRIMHLFSTRTSSGILYEVDARLRPSGAAGMLVTSADAFADYQQHEAWTWEHQALVRARVVYGDPQLTSQFDTVRRTIMTTARDGKTLQTEVREMREKMRAHLGNKHRDRFDIKADEGGITDIEFIAQYLVLRYAHEKPKLTRWSDNVRILELLAQNGIMDEHEAQALTVAYTTLRDELHHLALQELPGHVAQTCFSKERALVQASWRKWLVAV</sequence>
<protein>
    <recommendedName>
        <fullName evidence="1">Bifunctional glutamine synthetase adenylyltransferase/adenylyl-removing enzyme</fullName>
    </recommendedName>
    <alternativeName>
        <fullName evidence="1">ATP:glutamine synthetase adenylyltransferase</fullName>
    </alternativeName>
    <alternativeName>
        <fullName evidence="1">ATase</fullName>
    </alternativeName>
    <domain>
        <recommendedName>
            <fullName evidence="1">Glutamine synthetase adenylyl-L-tyrosine phosphorylase</fullName>
            <ecNumber evidence="1">2.7.7.89</ecNumber>
        </recommendedName>
        <alternativeName>
            <fullName evidence="1">Adenylyl removase</fullName>
            <shortName evidence="1">AR</shortName>
            <shortName evidence="1">AT-N</shortName>
        </alternativeName>
    </domain>
    <domain>
        <recommendedName>
            <fullName evidence="1">Glutamine synthetase adenylyl transferase</fullName>
            <ecNumber evidence="1">2.7.7.42</ecNumber>
        </recommendedName>
        <alternativeName>
            <fullName evidence="1">Adenylyl transferase</fullName>
            <shortName evidence="1">AT</shortName>
            <shortName evidence="1">AT-C</shortName>
        </alternativeName>
    </domain>
</protein>
<gene>
    <name evidence="1" type="primary">glnE</name>
    <name type="ordered locus">SEN3043</name>
</gene>
<feature type="chain" id="PRO_1000133912" description="Bifunctional glutamine synthetase adenylyltransferase/adenylyl-removing enzyme">
    <location>
        <begin position="1"/>
        <end position="947"/>
    </location>
</feature>
<feature type="region of interest" description="Adenylyl removase" evidence="1">
    <location>
        <begin position="1"/>
        <end position="440"/>
    </location>
</feature>
<feature type="region of interest" description="Adenylyl transferase" evidence="1">
    <location>
        <begin position="450"/>
        <end position="947"/>
    </location>
</feature>
<comment type="function">
    <text evidence="1">Involved in the regulation of glutamine synthetase GlnA, a key enzyme in the process to assimilate ammonia. When cellular nitrogen levels are high, the C-terminal adenylyl transferase (AT) inactivates GlnA by covalent transfer of an adenylyl group from ATP to specific tyrosine residue of GlnA, thus reducing its activity. Conversely, when nitrogen levels are low, the N-terminal adenylyl removase (AR) activates GlnA by removing the adenylyl group by phosphorolysis, increasing its activity. The regulatory region of GlnE binds the signal transduction protein PII (GlnB) which indicates the nitrogen status of the cell.</text>
</comment>
<comment type="catalytic activity">
    <reaction evidence="1">
        <text>[glutamine synthetase]-O(4)-(5'-adenylyl)-L-tyrosine + phosphate = [glutamine synthetase]-L-tyrosine + ADP</text>
        <dbReference type="Rhea" id="RHEA:43716"/>
        <dbReference type="Rhea" id="RHEA-COMP:10660"/>
        <dbReference type="Rhea" id="RHEA-COMP:10661"/>
        <dbReference type="ChEBI" id="CHEBI:43474"/>
        <dbReference type="ChEBI" id="CHEBI:46858"/>
        <dbReference type="ChEBI" id="CHEBI:83624"/>
        <dbReference type="ChEBI" id="CHEBI:456216"/>
        <dbReference type="EC" id="2.7.7.89"/>
    </reaction>
</comment>
<comment type="catalytic activity">
    <reaction evidence="1">
        <text>[glutamine synthetase]-L-tyrosine + ATP = [glutamine synthetase]-O(4)-(5'-adenylyl)-L-tyrosine + diphosphate</text>
        <dbReference type="Rhea" id="RHEA:18589"/>
        <dbReference type="Rhea" id="RHEA-COMP:10660"/>
        <dbReference type="Rhea" id="RHEA-COMP:10661"/>
        <dbReference type="ChEBI" id="CHEBI:30616"/>
        <dbReference type="ChEBI" id="CHEBI:33019"/>
        <dbReference type="ChEBI" id="CHEBI:46858"/>
        <dbReference type="ChEBI" id="CHEBI:83624"/>
        <dbReference type="EC" id="2.7.7.42"/>
    </reaction>
</comment>
<comment type="cofactor">
    <cofactor evidence="1">
        <name>Mg(2+)</name>
        <dbReference type="ChEBI" id="CHEBI:18420"/>
    </cofactor>
</comment>
<comment type="similarity">
    <text evidence="1">Belongs to the GlnE family.</text>
</comment>
<reference key="1">
    <citation type="journal article" date="2008" name="Genome Res.">
        <title>Comparative genome analysis of Salmonella enteritidis PT4 and Salmonella gallinarum 287/91 provides insights into evolutionary and host adaptation pathways.</title>
        <authorList>
            <person name="Thomson N.R."/>
            <person name="Clayton D.J."/>
            <person name="Windhorst D."/>
            <person name="Vernikos G."/>
            <person name="Davidson S."/>
            <person name="Churcher C."/>
            <person name="Quail M.A."/>
            <person name="Stevens M."/>
            <person name="Jones M.A."/>
            <person name="Watson M."/>
            <person name="Barron A."/>
            <person name="Layton A."/>
            <person name="Pickard D."/>
            <person name="Kingsley R.A."/>
            <person name="Bignell A."/>
            <person name="Clark L."/>
            <person name="Harris B."/>
            <person name="Ormond D."/>
            <person name="Abdellah Z."/>
            <person name="Brooks K."/>
            <person name="Cherevach I."/>
            <person name="Chillingworth T."/>
            <person name="Woodward J."/>
            <person name="Norberczak H."/>
            <person name="Lord A."/>
            <person name="Arrowsmith C."/>
            <person name="Jagels K."/>
            <person name="Moule S."/>
            <person name="Mungall K."/>
            <person name="Saunders M."/>
            <person name="Whitehead S."/>
            <person name="Chabalgoity J.A."/>
            <person name="Maskell D."/>
            <person name="Humphreys T."/>
            <person name="Roberts M."/>
            <person name="Barrow P.A."/>
            <person name="Dougan G."/>
            <person name="Parkhill J."/>
        </authorList>
    </citation>
    <scope>NUCLEOTIDE SEQUENCE [LARGE SCALE GENOMIC DNA]</scope>
    <source>
        <strain>P125109</strain>
    </source>
</reference>
<organism>
    <name type="scientific">Salmonella enteritidis PT4 (strain P125109)</name>
    <dbReference type="NCBI Taxonomy" id="550537"/>
    <lineage>
        <taxon>Bacteria</taxon>
        <taxon>Pseudomonadati</taxon>
        <taxon>Pseudomonadota</taxon>
        <taxon>Gammaproteobacteria</taxon>
        <taxon>Enterobacterales</taxon>
        <taxon>Enterobacteriaceae</taxon>
        <taxon>Salmonella</taxon>
    </lineage>
</organism>
<proteinExistence type="inferred from homology"/>
<keyword id="KW-0067">ATP-binding</keyword>
<keyword id="KW-0460">Magnesium</keyword>
<keyword id="KW-0511">Multifunctional enzyme</keyword>
<keyword id="KW-0547">Nucleotide-binding</keyword>
<keyword id="KW-0548">Nucleotidyltransferase</keyword>
<keyword id="KW-0808">Transferase</keyword>
<accession>B5QZ37</accession>